<accession>P0A6U3</accession>
<accession>P03816</accession>
<accession>P17112</accession>
<accession>Q2M859</accession>
<sequence>MFYPDPFDVIIIGGGHAGTEAAMAAARMGQQTLLLTHNIDTLGQMSCNPAIGGIGKGHLVKEVDALGGLMAKAIDQAGIQFRILNASKGPAVRATRAQADRVLYRQAVRTALENQPNLMIFQQAVEDLIVENDRVVGAVTQMGLKFRAKAVVLTVGTFLDGKIHIGLDNYSGGRAGDPPSIPLSRRLRELPLRVGRLKTGTPPRIDARTIDFSVLAQQHGDNPMPVFSFMGNASQHPQQVPCYITHTNEKTHDVIRSNLDRSPMYAGVIEGVGPRYCPSIEDKVMRFADRNQHQIFLEPEGLTSNEIYPNGISTSLPFDVQMQIVRSMQGMENAKIVRPGYAIEYDFFDPRDLKPTLESKFIQGLFFAGQINGTTGYEEAAAQGLLAGLNAARLSADKEGWAPARSQAYLGVLVDDLCTLGTKEPYRMFTSRAEYRLMLREDNADLRLTEIGRELGLVDDERWARFNEKLENIERERQRLKSTWVTPSAEAAAEVNAHLTAPLSREASGEDLLRRPEMTYEKLTTLTPFAPALTDEQAAEQVEIQVKYEGYIARQQDEIEKQLRNENTLLPATLDYRQVSGLSNEVIAKLNDHKPASIGQASRISGVTPAAISILLVWLKKQGMLRRSA</sequence>
<evidence type="ECO:0000250" key="1"/>
<evidence type="ECO:0000255" key="2"/>
<evidence type="ECO:0000269" key="3">
    <source>
    </source>
</evidence>
<evidence type="ECO:0000269" key="4">
    <source>
    </source>
</evidence>
<evidence type="ECO:0000269" key="5">
    <source>
    </source>
</evidence>
<evidence type="ECO:0000269" key="6">
    <source>
    </source>
</evidence>
<evidence type="ECO:0000305" key="7"/>
<evidence type="ECO:0007829" key="8">
    <source>
        <dbReference type="PDB" id="3CES"/>
    </source>
</evidence>
<evidence type="ECO:0007829" key="9">
    <source>
        <dbReference type="PDB" id="3CP2"/>
    </source>
</evidence>
<protein>
    <recommendedName>
        <fullName>tRNA uridine 5-carboxymethylaminomethyl modification enzyme MnmG</fullName>
    </recommendedName>
    <alternativeName>
        <fullName>Glucose-inhibited division protein A</fullName>
    </alternativeName>
</protein>
<dbReference type="EMBL" id="X01631">
    <property type="protein sequence ID" value="CAA25773.1"/>
    <property type="molecule type" value="Genomic_DNA"/>
</dbReference>
<dbReference type="EMBL" id="L10328">
    <property type="protein sequence ID" value="AAA62093.1"/>
    <property type="molecule type" value="Genomic_DNA"/>
</dbReference>
<dbReference type="EMBL" id="U00096">
    <property type="protein sequence ID" value="AAC76764.1"/>
    <property type="molecule type" value="Genomic_DNA"/>
</dbReference>
<dbReference type="EMBL" id="AP009048">
    <property type="protein sequence ID" value="BAE77547.1"/>
    <property type="molecule type" value="Genomic_DNA"/>
</dbReference>
<dbReference type="EMBL" id="K00826">
    <property type="protein sequence ID" value="AAA24250.2"/>
    <property type="molecule type" value="Genomic_DNA"/>
</dbReference>
<dbReference type="EMBL" id="J01657">
    <property type="status" value="NOT_ANNOTATED_CDS"/>
    <property type="molecule type" value="Genomic_DNA"/>
</dbReference>
<dbReference type="PIR" id="F65177">
    <property type="entry name" value="BVECQA"/>
</dbReference>
<dbReference type="RefSeq" id="NP_418197.1">
    <property type="nucleotide sequence ID" value="NC_000913.3"/>
</dbReference>
<dbReference type="RefSeq" id="WP_000499788.1">
    <property type="nucleotide sequence ID" value="NZ_STEB01000015.1"/>
</dbReference>
<dbReference type="PDB" id="3CES">
    <property type="method" value="X-ray"/>
    <property type="resolution" value="2.41 A"/>
    <property type="chains" value="A/B/C/D=1-629"/>
</dbReference>
<dbReference type="PDB" id="3CP2">
    <property type="method" value="X-ray"/>
    <property type="resolution" value="2.90 A"/>
    <property type="chains" value="A=1-629"/>
</dbReference>
<dbReference type="PDBsum" id="3CES"/>
<dbReference type="PDBsum" id="3CP2"/>
<dbReference type="SMR" id="P0A6U3"/>
<dbReference type="BioGRID" id="4263258">
    <property type="interactions" value="195"/>
</dbReference>
<dbReference type="BioGRID" id="852550">
    <property type="interactions" value="1"/>
</dbReference>
<dbReference type="ComplexPortal" id="CPX-5361">
    <property type="entry name" value="tRNA uridine 5-carboxymethylaminomethyl modification complex"/>
</dbReference>
<dbReference type="DIP" id="DIP-35786N"/>
<dbReference type="FunCoup" id="P0A6U3">
    <property type="interactions" value="909"/>
</dbReference>
<dbReference type="IntAct" id="P0A6U3">
    <property type="interactions" value="12"/>
</dbReference>
<dbReference type="STRING" id="511145.b3741"/>
<dbReference type="jPOST" id="P0A6U3"/>
<dbReference type="PaxDb" id="511145-b3741"/>
<dbReference type="EnsemblBacteria" id="AAC76764">
    <property type="protein sequence ID" value="AAC76764"/>
    <property type="gene ID" value="b3741"/>
</dbReference>
<dbReference type="GeneID" id="75205459"/>
<dbReference type="GeneID" id="948248"/>
<dbReference type="KEGG" id="ecj:JW3719"/>
<dbReference type="KEGG" id="eco:b3741"/>
<dbReference type="KEGG" id="ecoc:C3026_20270"/>
<dbReference type="PATRIC" id="fig|1411691.4.peg.2959"/>
<dbReference type="EchoBASE" id="EB0370"/>
<dbReference type="eggNOG" id="COG0445">
    <property type="taxonomic scope" value="Bacteria"/>
</dbReference>
<dbReference type="HOGENOM" id="CLU_007831_2_2_6"/>
<dbReference type="InParanoid" id="P0A6U3"/>
<dbReference type="OMA" id="CNPAMGG"/>
<dbReference type="OrthoDB" id="9815560at2"/>
<dbReference type="PhylomeDB" id="P0A6U3"/>
<dbReference type="BioCyc" id="EcoCyc:EG10375-MONOMER"/>
<dbReference type="BioCyc" id="MetaCyc:EG10375-MONOMER"/>
<dbReference type="EvolutionaryTrace" id="P0A6U3"/>
<dbReference type="PRO" id="PR:P0A6U3"/>
<dbReference type="Proteomes" id="UP000000625">
    <property type="component" value="Chromosome"/>
</dbReference>
<dbReference type="GO" id="GO:0005829">
    <property type="term" value="C:cytosol"/>
    <property type="evidence" value="ECO:0000314"/>
    <property type="project" value="EcoCyc"/>
</dbReference>
<dbReference type="GO" id="GO:0002144">
    <property type="term" value="C:cytosolic tRNA wobble base thiouridylase complex"/>
    <property type="evidence" value="ECO:0000353"/>
    <property type="project" value="ComplexPortal"/>
</dbReference>
<dbReference type="GO" id="GO:0050660">
    <property type="term" value="F:flavin adenine dinucleotide binding"/>
    <property type="evidence" value="ECO:0000314"/>
    <property type="project" value="EcoCyc"/>
</dbReference>
<dbReference type="GO" id="GO:0042803">
    <property type="term" value="F:protein homodimerization activity"/>
    <property type="evidence" value="ECO:0000314"/>
    <property type="project" value="EcoCyc"/>
</dbReference>
<dbReference type="GO" id="GO:0140018">
    <property type="term" value="P:regulation of cytoplasmic translational fidelity"/>
    <property type="evidence" value="ECO:0000303"/>
    <property type="project" value="ComplexPortal"/>
</dbReference>
<dbReference type="GO" id="GO:0009411">
    <property type="term" value="P:response to UV"/>
    <property type="evidence" value="ECO:0000315"/>
    <property type="project" value="EcoCyc"/>
</dbReference>
<dbReference type="GO" id="GO:0030488">
    <property type="term" value="P:tRNA methylation"/>
    <property type="evidence" value="ECO:0000315"/>
    <property type="project" value="EcoCyc"/>
</dbReference>
<dbReference type="GO" id="GO:0002926">
    <property type="term" value="P:tRNA wobble base 5-methoxycarbonylmethyl-2-thiouridinylation"/>
    <property type="evidence" value="ECO:0000314"/>
    <property type="project" value="ComplexPortal"/>
</dbReference>
<dbReference type="GO" id="GO:0002098">
    <property type="term" value="P:tRNA wobble uridine modification"/>
    <property type="evidence" value="ECO:0000314"/>
    <property type="project" value="EcoCyc"/>
</dbReference>
<dbReference type="FunFam" id="1.10.10.1800:FF:000001">
    <property type="entry name" value="tRNA uridine 5-carboxymethylaminomethyl modification enzyme MnmG"/>
    <property type="match status" value="1"/>
</dbReference>
<dbReference type="FunFam" id="1.10.150.570:FF:000001">
    <property type="entry name" value="tRNA uridine 5-carboxymethylaminomethyl modification enzyme MnmG"/>
    <property type="match status" value="1"/>
</dbReference>
<dbReference type="FunFam" id="3.50.50.60:FF:000002">
    <property type="entry name" value="tRNA uridine 5-carboxymethylaminomethyl modification enzyme MnmG"/>
    <property type="match status" value="1"/>
</dbReference>
<dbReference type="FunFam" id="3.50.50.60:FF:000010">
    <property type="entry name" value="tRNA uridine 5-carboxymethylaminomethyl modification enzyme MnmG"/>
    <property type="match status" value="1"/>
</dbReference>
<dbReference type="Gene3D" id="3.50.50.60">
    <property type="entry name" value="FAD/NAD(P)-binding domain"/>
    <property type="match status" value="2"/>
</dbReference>
<dbReference type="Gene3D" id="1.10.150.570">
    <property type="entry name" value="GidA associated domain, C-terminal subdomain"/>
    <property type="match status" value="1"/>
</dbReference>
<dbReference type="Gene3D" id="1.10.10.1800">
    <property type="entry name" value="tRNA uridine 5-carboxymethylaminomethyl modification enzyme MnmG/GidA"/>
    <property type="match status" value="1"/>
</dbReference>
<dbReference type="HAMAP" id="MF_00129">
    <property type="entry name" value="MnmG_GidA"/>
    <property type="match status" value="1"/>
</dbReference>
<dbReference type="InterPro" id="IPR036188">
    <property type="entry name" value="FAD/NAD-bd_sf"/>
</dbReference>
<dbReference type="InterPro" id="IPR049312">
    <property type="entry name" value="GIDA_C_N"/>
</dbReference>
<dbReference type="InterPro" id="IPR004416">
    <property type="entry name" value="MnmG"/>
</dbReference>
<dbReference type="InterPro" id="IPR002218">
    <property type="entry name" value="MnmG-rel"/>
</dbReference>
<dbReference type="InterPro" id="IPR020595">
    <property type="entry name" value="MnmG-rel_CS"/>
</dbReference>
<dbReference type="InterPro" id="IPR026904">
    <property type="entry name" value="MnmG_C"/>
</dbReference>
<dbReference type="InterPro" id="IPR047001">
    <property type="entry name" value="MnmG_C_subdom"/>
</dbReference>
<dbReference type="InterPro" id="IPR044920">
    <property type="entry name" value="MnmG_C_subdom_sf"/>
</dbReference>
<dbReference type="InterPro" id="IPR040131">
    <property type="entry name" value="MnmG_N"/>
</dbReference>
<dbReference type="NCBIfam" id="TIGR00136">
    <property type="entry name" value="mnmG_gidA"/>
    <property type="match status" value="1"/>
</dbReference>
<dbReference type="PANTHER" id="PTHR11806">
    <property type="entry name" value="GLUCOSE INHIBITED DIVISION PROTEIN A"/>
    <property type="match status" value="1"/>
</dbReference>
<dbReference type="PANTHER" id="PTHR11806:SF0">
    <property type="entry name" value="PROTEIN MTO1 HOMOLOG, MITOCHONDRIAL"/>
    <property type="match status" value="1"/>
</dbReference>
<dbReference type="Pfam" id="PF01134">
    <property type="entry name" value="GIDA"/>
    <property type="match status" value="1"/>
</dbReference>
<dbReference type="Pfam" id="PF21680">
    <property type="entry name" value="GIDA_C_1st"/>
    <property type="match status" value="1"/>
</dbReference>
<dbReference type="Pfam" id="PF13932">
    <property type="entry name" value="SAM_GIDA_C"/>
    <property type="match status" value="1"/>
</dbReference>
<dbReference type="SMART" id="SM01228">
    <property type="entry name" value="GIDA_assoc_3"/>
    <property type="match status" value="1"/>
</dbReference>
<dbReference type="SUPFAM" id="SSF51905">
    <property type="entry name" value="FAD/NAD(P)-binding domain"/>
    <property type="match status" value="1"/>
</dbReference>
<dbReference type="PROSITE" id="PS01280">
    <property type="entry name" value="GIDA_1"/>
    <property type="match status" value="1"/>
</dbReference>
<dbReference type="PROSITE" id="PS01281">
    <property type="entry name" value="GIDA_2"/>
    <property type="match status" value="1"/>
</dbReference>
<keyword id="KW-0002">3D-structure</keyword>
<keyword id="KW-0963">Cytoplasm</keyword>
<keyword id="KW-0274">FAD</keyword>
<keyword id="KW-0285">Flavoprotein</keyword>
<keyword id="KW-0520">NAD</keyword>
<keyword id="KW-1185">Reference proteome</keyword>
<keyword id="KW-0819">tRNA processing</keyword>
<organism>
    <name type="scientific">Escherichia coli (strain K12)</name>
    <dbReference type="NCBI Taxonomy" id="83333"/>
    <lineage>
        <taxon>Bacteria</taxon>
        <taxon>Pseudomonadati</taxon>
        <taxon>Pseudomonadota</taxon>
        <taxon>Gammaproteobacteria</taxon>
        <taxon>Enterobacterales</taxon>
        <taxon>Enterobacteriaceae</taxon>
        <taxon>Escherichia</taxon>
    </lineage>
</organism>
<reference key="1">
    <citation type="journal article" date="1984" name="Biochem. J.">
        <title>DNA sequence around the Escherichia coli unc operon. Completion of the sequence of a 17 kilobase segment containing asnA, oriC, unc, glmS and phoS.</title>
        <authorList>
            <person name="Walker J.E."/>
            <person name="Gay N.J."/>
            <person name="Saraste M."/>
            <person name="Eberle A.N."/>
        </authorList>
    </citation>
    <scope>NUCLEOTIDE SEQUENCE [GENOMIC DNA]</scope>
</reference>
<reference key="2">
    <citation type="journal article" date="1993" name="Genomics">
        <title>DNA sequence and analysis of 136 kilobases of the Escherichia coli genome: organizational symmetry around the origin of replication.</title>
        <authorList>
            <person name="Burland V.D."/>
            <person name="Plunkett G. III"/>
            <person name="Daniels D.L."/>
            <person name="Blattner F.R."/>
        </authorList>
    </citation>
    <scope>NUCLEOTIDE SEQUENCE [LARGE SCALE GENOMIC DNA]</scope>
    <source>
        <strain>K12 / MG1655 / ATCC 47076</strain>
    </source>
</reference>
<reference key="3">
    <citation type="journal article" date="1997" name="Science">
        <title>The complete genome sequence of Escherichia coli K-12.</title>
        <authorList>
            <person name="Blattner F.R."/>
            <person name="Plunkett G. III"/>
            <person name="Bloch C.A."/>
            <person name="Perna N.T."/>
            <person name="Burland V."/>
            <person name="Riley M."/>
            <person name="Collado-Vides J."/>
            <person name="Glasner J.D."/>
            <person name="Rode C.K."/>
            <person name="Mayhew G.F."/>
            <person name="Gregor J."/>
            <person name="Davis N.W."/>
            <person name="Kirkpatrick H.A."/>
            <person name="Goeden M.A."/>
            <person name="Rose D.J."/>
            <person name="Mau B."/>
            <person name="Shao Y."/>
        </authorList>
    </citation>
    <scope>NUCLEOTIDE SEQUENCE [LARGE SCALE GENOMIC DNA]</scope>
    <scope>SEQUENCE REVISION TO 515</scope>
    <source>
        <strain>K12 / MG1655 / ATCC 47076</strain>
    </source>
</reference>
<reference key="4">
    <citation type="journal article" date="2006" name="Mol. Syst. Biol.">
        <title>Highly accurate genome sequences of Escherichia coli K-12 strains MG1655 and W3110.</title>
        <authorList>
            <person name="Hayashi K."/>
            <person name="Morooka N."/>
            <person name="Yamamoto Y."/>
            <person name="Fujita K."/>
            <person name="Isono K."/>
            <person name="Choi S."/>
            <person name="Ohtsubo E."/>
            <person name="Baba T."/>
            <person name="Wanner B.L."/>
            <person name="Mori H."/>
            <person name="Horiuchi T."/>
        </authorList>
    </citation>
    <scope>NUCLEOTIDE SEQUENCE [LARGE SCALE GENOMIC DNA]</scope>
    <source>
        <strain>K12 / W3110 / ATCC 27325 / DSM 5911</strain>
    </source>
</reference>
<reference key="5">
    <citation type="journal article" date="1983" name="Gene">
        <title>The replication origin region of Escherichia coli: nucleotide sequence and functional units.</title>
        <authorList>
            <person name="Buhk H.-J."/>
            <person name="Messer W."/>
        </authorList>
    </citation>
    <scope>NUCLEOTIDE SEQUENCE [GENOMIC DNA] OF 1-196</scope>
</reference>
<reference key="6">
    <citation type="journal article" date="1979" name="Proc. Natl. Acad. Sci. U.S.A.">
        <title>Nucleotide sequence of Escherichia coli K-12 replication origin.</title>
        <authorList>
            <person name="Sugimoto K."/>
            <person name="Oka A."/>
            <person name="Sugisaki H."/>
            <person name="Takanami M."/>
            <person name="Nishimura A."/>
            <person name="Yasuda Y."/>
            <person name="Hirota Y."/>
        </authorList>
    </citation>
    <scope>NUCLEOTIDE SEQUENCE [GENOMIC DNA] OF 1-5</scope>
    <source>
        <strain>K12</strain>
    </source>
</reference>
<reference key="7">
    <citation type="journal article" date="1998" name="J. Bacteriol.">
        <title>Novel temperature-sensitive mutants of Escherichia coli that are unable to grow in the absence of wild-type tRNA6Leu.</title>
        <authorList>
            <person name="Nakayashiki T."/>
            <person name="Inokuchi H."/>
        </authorList>
    </citation>
    <scope>FUNCTION</scope>
</reference>
<reference key="8">
    <citation type="journal article" date="2001" name="Genes Dev.">
        <title>Translational misreading: a tRNA modification counteracts a +2 ribosomal frameshift.</title>
        <authorList>
            <person name="Bregeon D."/>
            <person name="Colot V."/>
            <person name="Radman M."/>
            <person name="Taddei F."/>
        </authorList>
    </citation>
    <scope>FUNCTION</scope>
</reference>
<reference key="9">
    <citation type="journal article" date="2006" name="Nucleic Acids Res.">
        <title>Further insights into the tRNA modification process controlled by proteins MnmE and GidA of Escherichia coli.</title>
        <authorList>
            <person name="Yim L."/>
            <person name="Moukadiri I."/>
            <person name="Bjoerk G.R."/>
            <person name="Armengod M.-E."/>
        </authorList>
    </citation>
    <scope>FUNCTION</scope>
    <scope>COFACTOR</scope>
    <scope>INTERACTION WITH MNME</scope>
    <scope>SUBCELLULAR LOCATION</scope>
    <scope>MUTAGENESIS OF GLY-13 AND GLY-15</scope>
    <source>
        <strain>K12</strain>
    </source>
</reference>
<reference key="10">
    <citation type="journal article" date="2008" name="J. Mol. Biol.">
        <title>Crystal structures of the conserved tRNA-modifying enzyme GidA: implications for its interaction with MnmE and substrate.</title>
        <authorList>
            <person name="Meyer S."/>
            <person name="Scrima A."/>
            <person name="Versees W."/>
            <person name="Wittinghofer A."/>
        </authorList>
    </citation>
    <scope>X-RAY CRYSTALLOGRAPHY (2.9 ANGSTROMS)</scope>
    <scope>SUBUNIT</scope>
    <scope>NAD AND FAD BINDING</scope>
</reference>
<feature type="chain" id="PRO_0000117099" description="tRNA uridine 5-carboxymethylaminomethyl modification enzyme MnmG">
    <location>
        <begin position="1"/>
        <end position="629"/>
    </location>
</feature>
<feature type="binding site" evidence="1">
    <location>
        <begin position="13"/>
        <end position="18"/>
    </location>
    <ligand>
        <name>FAD</name>
        <dbReference type="ChEBI" id="CHEBI:57692"/>
    </ligand>
</feature>
<feature type="binding site" evidence="1">
    <location>
        <position position="125"/>
    </location>
    <ligand>
        <name>FAD</name>
        <dbReference type="ChEBI" id="CHEBI:57692"/>
    </ligand>
</feature>
<feature type="binding site" evidence="1">
    <location>
        <position position="180"/>
    </location>
    <ligand>
        <name>FAD</name>
        <dbReference type="ChEBI" id="CHEBI:57692"/>
    </ligand>
</feature>
<feature type="binding site" evidence="2">
    <location>
        <begin position="273"/>
        <end position="287"/>
    </location>
    <ligand>
        <name>NAD(+)</name>
        <dbReference type="ChEBI" id="CHEBI:57540"/>
    </ligand>
</feature>
<feature type="binding site" evidence="1">
    <location>
        <position position="370"/>
    </location>
    <ligand>
        <name>FAD</name>
        <dbReference type="ChEBI" id="CHEBI:57692"/>
    </ligand>
</feature>
<feature type="mutagenesis site" description="Decrease in FAD binding and partial loss of activity. Loss of activity; when associated with A-15." evidence="4">
    <original>G</original>
    <variation>A</variation>
    <location>
        <position position="13"/>
    </location>
</feature>
<feature type="mutagenesis site" description="Decrease in FAD binding and partial loss of activity. Loss of activity; when associated with A-13." evidence="4">
    <original>G</original>
    <variation>A</variation>
    <location>
        <position position="15"/>
    </location>
</feature>
<feature type="sequence conflict" description="In Ref. 1 and 2." evidence="7" ref="1 2">
    <location>
        <position position="515"/>
    </location>
</feature>
<feature type="strand" evidence="8">
    <location>
        <begin position="7"/>
        <end position="12"/>
    </location>
</feature>
<feature type="helix" evidence="8">
    <location>
        <begin position="16"/>
        <end position="27"/>
    </location>
</feature>
<feature type="strand" evidence="8">
    <location>
        <begin position="32"/>
        <end position="37"/>
    </location>
</feature>
<feature type="helix" evidence="8">
    <location>
        <begin position="39"/>
        <end position="41"/>
    </location>
</feature>
<feature type="strand" evidence="8">
    <location>
        <begin position="46"/>
        <end position="53"/>
    </location>
</feature>
<feature type="helix" evidence="8">
    <location>
        <begin position="56"/>
        <end position="65"/>
    </location>
</feature>
<feature type="helix" evidence="8">
    <location>
        <begin position="70"/>
        <end position="77"/>
    </location>
</feature>
<feature type="strand" evidence="8">
    <location>
        <begin position="78"/>
        <end position="85"/>
    </location>
</feature>
<feature type="strand" evidence="9">
    <location>
        <begin position="86"/>
        <end position="88"/>
    </location>
</feature>
<feature type="helix" evidence="8">
    <location>
        <begin position="90"/>
        <end position="92"/>
    </location>
</feature>
<feature type="strand" evidence="8">
    <location>
        <begin position="94"/>
        <end position="99"/>
    </location>
</feature>
<feature type="helix" evidence="8">
    <location>
        <begin position="101"/>
        <end position="113"/>
    </location>
</feature>
<feature type="strand" evidence="8">
    <location>
        <begin position="118"/>
        <end position="122"/>
    </location>
</feature>
<feature type="strand" evidence="8">
    <location>
        <begin position="125"/>
        <end position="140"/>
    </location>
</feature>
<feature type="strand" evidence="8">
    <location>
        <begin position="143"/>
        <end position="153"/>
    </location>
</feature>
<feature type="turn" evidence="8">
    <location>
        <begin position="157"/>
        <end position="159"/>
    </location>
</feature>
<feature type="strand" evidence="8">
    <location>
        <begin position="162"/>
        <end position="164"/>
    </location>
</feature>
<feature type="helix" evidence="8">
    <location>
        <begin position="182"/>
        <end position="188"/>
    </location>
</feature>
<feature type="turn" evidence="8">
    <location>
        <begin position="189"/>
        <end position="191"/>
    </location>
</feature>
<feature type="strand" evidence="8">
    <location>
        <begin position="194"/>
        <end position="197"/>
    </location>
</feature>
<feature type="strand" evidence="8">
    <location>
        <begin position="204"/>
        <end position="206"/>
    </location>
</feature>
<feature type="helix" evidence="8">
    <location>
        <begin position="207"/>
        <end position="209"/>
    </location>
</feature>
<feature type="helix" evidence="8">
    <location>
        <begin position="212"/>
        <end position="214"/>
    </location>
</feature>
<feature type="strand" evidence="8">
    <location>
        <begin position="215"/>
        <end position="218"/>
    </location>
</feature>
<feature type="strand" evidence="9">
    <location>
        <begin position="227"/>
        <end position="230"/>
    </location>
</feature>
<feature type="helix" evidence="8">
    <location>
        <begin position="233"/>
        <end position="235"/>
    </location>
</feature>
<feature type="strand" evidence="8">
    <location>
        <begin position="242"/>
        <end position="246"/>
    </location>
</feature>
<feature type="helix" evidence="8">
    <location>
        <begin position="249"/>
        <end position="257"/>
    </location>
</feature>
<feature type="helix" evidence="8">
    <location>
        <begin position="258"/>
        <end position="261"/>
    </location>
</feature>
<feature type="helix" evidence="8">
    <location>
        <begin position="280"/>
        <end position="286"/>
    </location>
</feature>
<feature type="strand" evidence="8">
    <location>
        <begin position="289"/>
        <end position="291"/>
    </location>
</feature>
<feature type="strand" evidence="8">
    <location>
        <begin position="294"/>
        <end position="300"/>
    </location>
</feature>
<feature type="strand" evidence="8">
    <location>
        <begin position="306"/>
        <end position="310"/>
    </location>
</feature>
<feature type="helix" evidence="8">
    <location>
        <begin position="318"/>
        <end position="326"/>
    </location>
</feature>
<feature type="strand" evidence="8">
    <location>
        <begin position="336"/>
        <end position="338"/>
    </location>
</feature>
<feature type="strand" evidence="8">
    <location>
        <begin position="341"/>
        <end position="348"/>
    </location>
</feature>
<feature type="helix" evidence="8">
    <location>
        <begin position="350"/>
        <end position="352"/>
    </location>
</feature>
<feature type="strand" evidence="8">
    <location>
        <begin position="357"/>
        <end position="363"/>
    </location>
</feature>
<feature type="strand" evidence="8">
    <location>
        <begin position="365"/>
        <end position="367"/>
    </location>
</feature>
<feature type="helix" evidence="8">
    <location>
        <begin position="370"/>
        <end position="372"/>
    </location>
</feature>
<feature type="helix" evidence="8">
    <location>
        <begin position="377"/>
        <end position="395"/>
    </location>
</feature>
<feature type="turn" evidence="8">
    <location>
        <begin position="405"/>
        <end position="407"/>
    </location>
</feature>
<feature type="helix" evidence="8">
    <location>
        <begin position="409"/>
        <end position="420"/>
    </location>
</feature>
<feature type="helix" evidence="8">
    <location>
        <begin position="426"/>
        <end position="428"/>
    </location>
</feature>
<feature type="helix" evidence="8">
    <location>
        <begin position="429"/>
        <end position="433"/>
    </location>
</feature>
<feature type="helix" evidence="9">
    <location>
        <begin position="434"/>
        <end position="438"/>
    </location>
</feature>
<feature type="helix" evidence="8">
    <location>
        <begin position="441"/>
        <end position="443"/>
    </location>
</feature>
<feature type="helix" evidence="8">
    <location>
        <begin position="444"/>
        <end position="455"/>
    </location>
</feature>
<feature type="helix" evidence="8">
    <location>
        <begin position="460"/>
        <end position="481"/>
    </location>
</feature>
<feature type="helix" evidence="8">
    <location>
        <begin position="492"/>
        <end position="496"/>
    </location>
</feature>
<feature type="strand" evidence="8">
    <location>
        <begin position="499"/>
        <end position="501"/>
    </location>
</feature>
<feature type="helix" evidence="8">
    <location>
        <begin position="509"/>
        <end position="513"/>
    </location>
</feature>
<feature type="helix" evidence="8">
    <location>
        <begin position="520"/>
        <end position="523"/>
    </location>
</feature>
<feature type="turn" evidence="8">
    <location>
        <begin position="527"/>
        <end position="529"/>
    </location>
</feature>
<feature type="helix" evidence="8">
    <location>
        <begin position="536"/>
        <end position="547"/>
    </location>
</feature>
<feature type="turn" evidence="9">
    <location>
        <begin position="549"/>
        <end position="552"/>
    </location>
</feature>
<proteinExistence type="evidence at protein level"/>
<gene>
    <name type="primary">mnmG</name>
    <name type="synonym">gidA</name>
    <name type="synonym">trmF</name>
    <name type="ordered locus">b3741</name>
    <name type="ordered locus">JW3719</name>
</gene>
<name>MNMG_ECOLI</name>
<comment type="function">
    <text evidence="3 4 6">NAD-binding protein involved in the addition of a carboxymethylaminomethyl (cmnm) group at the wobble position (U34) of certain tRNAs, forming tRNA-cmnm(5)s(2)U34.</text>
</comment>
<comment type="cofactor">
    <cofactor evidence="4">
        <name>FAD</name>
        <dbReference type="ChEBI" id="CHEBI:57692"/>
    </cofactor>
</comment>
<comment type="subunit">
    <text evidence="5">Homodimer. Heterotetramer of two MnmE and two MnmG subunits.</text>
</comment>
<comment type="interaction">
    <interactant intactId="EBI-550977">
        <id>P0A6U3</id>
    </interactant>
    <interactant intactId="EBI-550986">
        <id>P25522</id>
        <label>mnmE</label>
    </interactant>
    <organismsDiffer>false</organismsDiffer>
    <experiments>6</experiments>
</comment>
<comment type="subcellular location">
    <subcellularLocation>
        <location evidence="4">Cytoplasm</location>
    </subcellularLocation>
</comment>
<comment type="similarity">
    <text evidence="7">Belongs to the MnmG family.</text>
</comment>